<feature type="chain" id="PRO_0000309053" description="Putative uncharacterized protein YMR307C-A">
    <location>
        <begin position="1"/>
        <end position="64"/>
    </location>
</feature>
<comment type="miscellaneous">
    <text evidence="1">Completely overlaps GAS1.</text>
</comment>
<comment type="caution">
    <text evidence="2">Product of a dubious gene prediction unlikely to encode a functional protein. Because of that it is not part of the S.cerevisiae S288c complete/reference proteome set.</text>
</comment>
<gene>
    <name type="ordered locus">YMR307C-A</name>
    <name type="ORF">smORF544</name>
</gene>
<protein>
    <recommendedName>
        <fullName>Putative uncharacterized protein YMR307C-A</fullName>
    </recommendedName>
</protein>
<reference key="1">
    <citation type="journal article" date="1997" name="Nature">
        <title>The nucleotide sequence of Saccharomyces cerevisiae chromosome XIII.</title>
        <authorList>
            <person name="Bowman S."/>
            <person name="Churcher C.M."/>
            <person name="Badcock K."/>
            <person name="Brown D."/>
            <person name="Chillingworth T."/>
            <person name="Connor R."/>
            <person name="Dedman K."/>
            <person name="Devlin K."/>
            <person name="Gentles S."/>
            <person name="Hamlin N."/>
            <person name="Hunt S."/>
            <person name="Jagels K."/>
            <person name="Lye G."/>
            <person name="Moule S."/>
            <person name="Odell C."/>
            <person name="Pearson D."/>
            <person name="Rajandream M.A."/>
            <person name="Rice P."/>
            <person name="Skelton J."/>
            <person name="Walsh S.V."/>
            <person name="Whitehead S."/>
            <person name="Barrell B.G."/>
        </authorList>
    </citation>
    <scope>NUCLEOTIDE SEQUENCE [LARGE SCALE GENOMIC DNA]</scope>
    <source>
        <strain>ATCC 204508 / S288c</strain>
    </source>
</reference>
<reference key="2">
    <citation type="journal article" date="2014" name="G3 (Bethesda)">
        <title>The reference genome sequence of Saccharomyces cerevisiae: Then and now.</title>
        <authorList>
            <person name="Engel S.R."/>
            <person name="Dietrich F.S."/>
            <person name="Fisk D.G."/>
            <person name="Binkley G."/>
            <person name="Balakrishnan R."/>
            <person name="Costanzo M.C."/>
            <person name="Dwight S.S."/>
            <person name="Hitz B.C."/>
            <person name="Karra K."/>
            <person name="Nash R.S."/>
            <person name="Weng S."/>
            <person name="Wong E.D."/>
            <person name="Lloyd P."/>
            <person name="Skrzypek M.S."/>
            <person name="Miyasato S.R."/>
            <person name="Simison M."/>
            <person name="Cherry J.M."/>
        </authorList>
    </citation>
    <scope>GENOME REANNOTATION</scope>
    <source>
        <strain>ATCC 204508 / S288c</strain>
    </source>
</reference>
<reference key="3">
    <citation type="journal article" date="2003" name="Genome Res.">
        <title>Systematic discovery of new genes in the Saccharomyces cerevisiae genome.</title>
        <authorList>
            <person name="Kessler M.M."/>
            <person name="Zeng Q."/>
            <person name="Hogan S."/>
            <person name="Cook R."/>
            <person name="Morales A.J."/>
            <person name="Cottarel G."/>
        </authorList>
    </citation>
    <scope>GENOME REANNOTATION</scope>
</reference>
<dbReference type="EMBL" id="Z49212">
    <property type="status" value="NOT_ANNOTATED_CDS"/>
    <property type="molecule type" value="Genomic_DNA"/>
</dbReference>
<dbReference type="STRING" id="4932.YMR307C-A"/>
<dbReference type="PaxDb" id="4932-YMR307C-A"/>
<dbReference type="EnsemblFungi" id="YMR307C-A_mRNA">
    <property type="protein sequence ID" value="YMR307C-A"/>
    <property type="gene ID" value="YMR307C-A"/>
</dbReference>
<dbReference type="AGR" id="SGD:S000028578"/>
<dbReference type="SGD" id="S000028578">
    <property type="gene designation" value="YMR307C-A"/>
</dbReference>
<dbReference type="HOGENOM" id="CLU_2869379_0_0_1"/>
<sequence length="64" mass="7016">MLTKPYLLVSSKYMYTIPPDQTSVILEPYKASTSVNSLGVTSLQPYSEKKTGIDKFLNSAVLSA</sequence>
<evidence type="ECO:0000305" key="1"/>
<evidence type="ECO:0000305" key="2">
    <source>
    </source>
</evidence>
<proteinExistence type="uncertain"/>
<organism>
    <name type="scientific">Saccharomyces cerevisiae (strain ATCC 204508 / S288c)</name>
    <name type="common">Baker's yeast</name>
    <dbReference type="NCBI Taxonomy" id="559292"/>
    <lineage>
        <taxon>Eukaryota</taxon>
        <taxon>Fungi</taxon>
        <taxon>Dikarya</taxon>
        <taxon>Ascomycota</taxon>
        <taxon>Saccharomycotina</taxon>
        <taxon>Saccharomycetes</taxon>
        <taxon>Saccharomycetales</taxon>
        <taxon>Saccharomycetaceae</taxon>
        <taxon>Saccharomyces</taxon>
    </lineage>
</organism>
<name>YM307_YEAST</name>
<accession>P0C5Q5</accession>